<protein>
    <recommendedName>
        <fullName>Olfactomedin-like protein 1</fullName>
    </recommendedName>
</protein>
<feature type="signal peptide" evidence="4">
    <location>
        <begin position="1"/>
        <end position="28"/>
    </location>
</feature>
<feature type="chain" id="PRO_0000020090" description="Olfactomedin-like protein 1">
    <location>
        <begin position="29"/>
        <end position="402"/>
    </location>
</feature>
<feature type="domain" description="Olfactomedin-like" evidence="2">
    <location>
        <begin position="140"/>
        <end position="397"/>
    </location>
</feature>
<feature type="coiled-coil region" evidence="1">
    <location>
        <begin position="79"/>
        <end position="133"/>
    </location>
</feature>
<feature type="glycosylation site" description="N-linked (GlcNAc...) asparagine" evidence="1">
    <location>
        <position position="66"/>
    </location>
</feature>
<feature type="glycosylation site" description="N-linked (GlcNAc...) asparagine" evidence="1">
    <location>
        <position position="138"/>
    </location>
</feature>
<feature type="glycosylation site" description="N-linked (GlcNAc...) asparagine" evidence="1">
    <location>
        <position position="183"/>
    </location>
</feature>
<feature type="disulfide bond" evidence="2">
    <location>
        <begin position="141"/>
        <end position="324"/>
    </location>
</feature>
<feature type="sequence variant" id="VAR_034362" description="In dbSNP:rs12805648." evidence="3 5 6">
    <original>E</original>
    <variation>V</variation>
    <location>
        <position position="113"/>
    </location>
</feature>
<feature type="sequence variant" id="VAR_034363" description="In dbSNP:rs12803046.">
    <original>A</original>
    <variation>T</variation>
    <location>
        <position position="259"/>
    </location>
</feature>
<comment type="subcellular location">
    <subcellularLocation>
        <location evidence="7">Secreted</location>
    </subcellularLocation>
</comment>
<comment type="tissue specificity">
    <text evidence="7">Mainly expressed in the small intestine, liver, lung and heart.</text>
</comment>
<comment type="PTM">
    <text evidence="7">Highly N-glycosylated.</text>
</comment>
<evidence type="ECO:0000255" key="1"/>
<evidence type="ECO:0000255" key="2">
    <source>
        <dbReference type="PROSITE-ProRule" id="PRU00446"/>
    </source>
</evidence>
<evidence type="ECO:0000269" key="3">
    <source>
    </source>
</evidence>
<evidence type="ECO:0000269" key="4">
    <source>
    </source>
</evidence>
<evidence type="ECO:0000269" key="5">
    <source>
    </source>
</evidence>
<evidence type="ECO:0000269" key="6">
    <source>
    </source>
</evidence>
<evidence type="ECO:0000269" key="7">
    <source>
    </source>
</evidence>
<gene>
    <name type="primary">OLFML1</name>
    <name type="ORF">UNQ564/PRO1126</name>
</gene>
<reference key="1">
    <citation type="journal article" date="2003" name="Genome Res.">
        <title>The secreted protein discovery initiative (SPDI), a large-scale effort to identify novel human secreted and transmembrane proteins: a bioinformatics assessment.</title>
        <authorList>
            <person name="Clark H.F."/>
            <person name="Gurney A.L."/>
            <person name="Abaya E."/>
            <person name="Baker K."/>
            <person name="Baldwin D.T."/>
            <person name="Brush J."/>
            <person name="Chen J."/>
            <person name="Chow B."/>
            <person name="Chui C."/>
            <person name="Crowley C."/>
            <person name="Currell B."/>
            <person name="Deuel B."/>
            <person name="Dowd P."/>
            <person name="Eaton D."/>
            <person name="Foster J.S."/>
            <person name="Grimaldi C."/>
            <person name="Gu Q."/>
            <person name="Hass P.E."/>
            <person name="Heldens S."/>
            <person name="Huang A."/>
            <person name="Kim H.S."/>
            <person name="Klimowski L."/>
            <person name="Jin Y."/>
            <person name="Johnson S."/>
            <person name="Lee J."/>
            <person name="Lewis L."/>
            <person name="Liao D."/>
            <person name="Mark M.R."/>
            <person name="Robbie E."/>
            <person name="Sanchez C."/>
            <person name="Schoenfeld J."/>
            <person name="Seshagiri S."/>
            <person name="Simmons L."/>
            <person name="Singh J."/>
            <person name="Smith V."/>
            <person name="Stinson J."/>
            <person name="Vagts A."/>
            <person name="Vandlen R.L."/>
            <person name="Watanabe C."/>
            <person name="Wieand D."/>
            <person name="Woods K."/>
            <person name="Xie M.-H."/>
            <person name="Yansura D.G."/>
            <person name="Yi S."/>
            <person name="Yu G."/>
            <person name="Yuan J."/>
            <person name="Zhang M."/>
            <person name="Zhang Z."/>
            <person name="Goddard A.D."/>
            <person name="Wood W.I."/>
            <person name="Godowski P.J."/>
            <person name="Gray A.M."/>
        </authorList>
    </citation>
    <scope>NUCLEOTIDE SEQUENCE [LARGE SCALE MRNA]</scope>
    <scope>VARIANT VAL-113</scope>
</reference>
<reference key="2">
    <citation type="journal article" date="2004" name="Nat. Genet.">
        <title>Complete sequencing and characterization of 21,243 full-length human cDNAs.</title>
        <authorList>
            <person name="Ota T."/>
            <person name="Suzuki Y."/>
            <person name="Nishikawa T."/>
            <person name="Otsuki T."/>
            <person name="Sugiyama T."/>
            <person name="Irie R."/>
            <person name="Wakamatsu A."/>
            <person name="Hayashi K."/>
            <person name="Sato H."/>
            <person name="Nagai K."/>
            <person name="Kimura K."/>
            <person name="Makita H."/>
            <person name="Sekine M."/>
            <person name="Obayashi M."/>
            <person name="Nishi T."/>
            <person name="Shibahara T."/>
            <person name="Tanaka T."/>
            <person name="Ishii S."/>
            <person name="Yamamoto J."/>
            <person name="Saito K."/>
            <person name="Kawai Y."/>
            <person name="Isono Y."/>
            <person name="Nakamura Y."/>
            <person name="Nagahari K."/>
            <person name="Murakami K."/>
            <person name="Yasuda T."/>
            <person name="Iwayanagi T."/>
            <person name="Wagatsuma M."/>
            <person name="Shiratori A."/>
            <person name="Sudo H."/>
            <person name="Hosoiri T."/>
            <person name="Kaku Y."/>
            <person name="Kodaira H."/>
            <person name="Kondo H."/>
            <person name="Sugawara M."/>
            <person name="Takahashi M."/>
            <person name="Kanda K."/>
            <person name="Yokoi T."/>
            <person name="Furuya T."/>
            <person name="Kikkawa E."/>
            <person name="Omura Y."/>
            <person name="Abe K."/>
            <person name="Kamihara K."/>
            <person name="Katsuta N."/>
            <person name="Sato K."/>
            <person name="Tanikawa M."/>
            <person name="Yamazaki M."/>
            <person name="Ninomiya K."/>
            <person name="Ishibashi T."/>
            <person name="Yamashita H."/>
            <person name="Murakawa K."/>
            <person name="Fujimori K."/>
            <person name="Tanai H."/>
            <person name="Kimata M."/>
            <person name="Watanabe M."/>
            <person name="Hiraoka S."/>
            <person name="Chiba Y."/>
            <person name="Ishida S."/>
            <person name="Ono Y."/>
            <person name="Takiguchi S."/>
            <person name="Watanabe S."/>
            <person name="Yosida M."/>
            <person name="Hotuta T."/>
            <person name="Kusano J."/>
            <person name="Kanehori K."/>
            <person name="Takahashi-Fujii A."/>
            <person name="Hara H."/>
            <person name="Tanase T.-O."/>
            <person name="Nomura Y."/>
            <person name="Togiya S."/>
            <person name="Komai F."/>
            <person name="Hara R."/>
            <person name="Takeuchi K."/>
            <person name="Arita M."/>
            <person name="Imose N."/>
            <person name="Musashino K."/>
            <person name="Yuuki H."/>
            <person name="Oshima A."/>
            <person name="Sasaki N."/>
            <person name="Aotsuka S."/>
            <person name="Yoshikawa Y."/>
            <person name="Matsunawa H."/>
            <person name="Ichihara T."/>
            <person name="Shiohata N."/>
            <person name="Sano S."/>
            <person name="Moriya S."/>
            <person name="Momiyama H."/>
            <person name="Satoh N."/>
            <person name="Takami S."/>
            <person name="Terashima Y."/>
            <person name="Suzuki O."/>
            <person name="Nakagawa S."/>
            <person name="Senoh A."/>
            <person name="Mizoguchi H."/>
            <person name="Goto Y."/>
            <person name="Shimizu F."/>
            <person name="Wakebe H."/>
            <person name="Hishigaki H."/>
            <person name="Watanabe T."/>
            <person name="Sugiyama A."/>
            <person name="Takemoto M."/>
            <person name="Kawakami B."/>
            <person name="Yamazaki M."/>
            <person name="Watanabe K."/>
            <person name="Kumagai A."/>
            <person name="Itakura S."/>
            <person name="Fukuzumi Y."/>
            <person name="Fujimori Y."/>
            <person name="Komiyama M."/>
            <person name="Tashiro H."/>
            <person name="Tanigami A."/>
            <person name="Fujiwara T."/>
            <person name="Ono T."/>
            <person name="Yamada K."/>
            <person name="Fujii Y."/>
            <person name="Ozaki K."/>
            <person name="Hirao M."/>
            <person name="Ohmori Y."/>
            <person name="Kawabata A."/>
            <person name="Hikiji T."/>
            <person name="Kobatake N."/>
            <person name="Inagaki H."/>
            <person name="Ikema Y."/>
            <person name="Okamoto S."/>
            <person name="Okitani R."/>
            <person name="Kawakami T."/>
            <person name="Noguchi S."/>
            <person name="Itoh T."/>
            <person name="Shigeta K."/>
            <person name="Senba T."/>
            <person name="Matsumura K."/>
            <person name="Nakajima Y."/>
            <person name="Mizuno T."/>
            <person name="Morinaga M."/>
            <person name="Sasaki M."/>
            <person name="Togashi T."/>
            <person name="Oyama M."/>
            <person name="Hata H."/>
            <person name="Watanabe M."/>
            <person name="Komatsu T."/>
            <person name="Mizushima-Sugano J."/>
            <person name="Satoh T."/>
            <person name="Shirai Y."/>
            <person name="Takahashi Y."/>
            <person name="Nakagawa K."/>
            <person name="Okumura K."/>
            <person name="Nagase T."/>
            <person name="Nomura N."/>
            <person name="Kikuchi H."/>
            <person name="Masuho Y."/>
            <person name="Yamashita R."/>
            <person name="Nakai K."/>
            <person name="Yada T."/>
            <person name="Nakamura Y."/>
            <person name="Ohara O."/>
            <person name="Isogai T."/>
            <person name="Sugano S."/>
        </authorList>
    </citation>
    <scope>NUCLEOTIDE SEQUENCE [LARGE SCALE MRNA]</scope>
</reference>
<reference key="3">
    <citation type="journal article" date="2006" name="Nature">
        <title>Human chromosome 11 DNA sequence and analysis including novel gene identification.</title>
        <authorList>
            <person name="Taylor T.D."/>
            <person name="Noguchi H."/>
            <person name="Totoki Y."/>
            <person name="Toyoda A."/>
            <person name="Kuroki Y."/>
            <person name="Dewar K."/>
            <person name="Lloyd C."/>
            <person name="Itoh T."/>
            <person name="Takeda T."/>
            <person name="Kim D.-W."/>
            <person name="She X."/>
            <person name="Barlow K.F."/>
            <person name="Bloom T."/>
            <person name="Bruford E."/>
            <person name="Chang J.L."/>
            <person name="Cuomo C.A."/>
            <person name="Eichler E."/>
            <person name="FitzGerald M.G."/>
            <person name="Jaffe D.B."/>
            <person name="LaButti K."/>
            <person name="Nicol R."/>
            <person name="Park H.-S."/>
            <person name="Seaman C."/>
            <person name="Sougnez C."/>
            <person name="Yang X."/>
            <person name="Zimmer A.R."/>
            <person name="Zody M.C."/>
            <person name="Birren B.W."/>
            <person name="Nusbaum C."/>
            <person name="Fujiyama A."/>
            <person name="Hattori M."/>
            <person name="Rogers J."/>
            <person name="Lander E.S."/>
            <person name="Sakaki Y."/>
        </authorList>
    </citation>
    <scope>NUCLEOTIDE SEQUENCE [LARGE SCALE GENOMIC DNA]</scope>
    <scope>VARIANT VAL-113</scope>
</reference>
<reference key="4">
    <citation type="journal article" date="2004" name="Genome Res.">
        <title>The status, quality, and expansion of the NIH full-length cDNA project: the Mammalian Gene Collection (MGC).</title>
        <authorList>
            <consortium name="The MGC Project Team"/>
        </authorList>
    </citation>
    <scope>NUCLEOTIDE SEQUENCE [LARGE SCALE MRNA]</scope>
    <scope>VARIANT VAL-113</scope>
    <source>
        <tissue>Pancreas</tissue>
        <tissue>Placenta</tissue>
    </source>
</reference>
<reference key="5">
    <citation type="journal article" date="2004" name="Protein Sci.">
        <title>Signal peptide prediction based on analysis of experimentally verified cleavage sites.</title>
        <authorList>
            <person name="Zhang Z."/>
            <person name="Henzel W.J."/>
        </authorList>
    </citation>
    <scope>PROTEIN SEQUENCE OF 29-43</scope>
</reference>
<reference key="6">
    <citation type="journal article" date="2008" name="FEBS Lett.">
        <title>hOLFML1, a novel secreted glycoprotein, enhances the proliferation of human cancer cell lines in vitro.</title>
        <authorList>
            <person name="Wan B."/>
            <person name="Zhou Y.B."/>
            <person name="Zhang X."/>
            <person name="Zhu H."/>
            <person name="Huo K."/>
            <person name="Han Z.G."/>
        </authorList>
    </citation>
    <scope>SUBCELLULAR LOCATION</scope>
    <scope>TISSUE SPECIFICITY</scope>
    <scope>GLYCOSYLATION</scope>
</reference>
<reference key="7">
    <citation type="journal article" date="2014" name="J. Proteomics">
        <title>An enzyme assisted RP-RPLC approach for in-depth analysis of human liver phosphoproteome.</title>
        <authorList>
            <person name="Bian Y."/>
            <person name="Song C."/>
            <person name="Cheng K."/>
            <person name="Dong M."/>
            <person name="Wang F."/>
            <person name="Huang J."/>
            <person name="Sun D."/>
            <person name="Wang L."/>
            <person name="Ye M."/>
            <person name="Zou H."/>
        </authorList>
    </citation>
    <scope>IDENTIFICATION BY MASS SPECTROMETRY [LARGE SCALE ANALYSIS]</scope>
    <source>
        <tissue>Liver</tissue>
    </source>
</reference>
<organism>
    <name type="scientific">Homo sapiens</name>
    <name type="common">Human</name>
    <dbReference type="NCBI Taxonomy" id="9606"/>
    <lineage>
        <taxon>Eukaryota</taxon>
        <taxon>Metazoa</taxon>
        <taxon>Chordata</taxon>
        <taxon>Craniata</taxon>
        <taxon>Vertebrata</taxon>
        <taxon>Euteleostomi</taxon>
        <taxon>Mammalia</taxon>
        <taxon>Eutheria</taxon>
        <taxon>Euarchontoglires</taxon>
        <taxon>Primates</taxon>
        <taxon>Haplorrhini</taxon>
        <taxon>Catarrhini</taxon>
        <taxon>Hominidae</taxon>
        <taxon>Homo</taxon>
    </lineage>
</organism>
<accession>Q6UWY5</accession>
<accession>B4DP03</accession>
<accession>Q569G4</accession>
<sequence>MMVALRGASALLVLFLAAFLPPPQCTQDPAMVHYIYQRFRVLEQGLEKCTQATRAYIQEFQEFSKNISVMLGRCQTYTSEYKSAVGNLALRVERAQREIDYIQYLREADECIESEDKTLAEMLLQEAEEEKKIRTLLNASCDNMLMGIKSLKIVKKMMDTHGSWMKDAVYNSPKVYLLIGSRNNTVWEFANIRAFMEDNTKPAPRKQILTLSWQGTGQVIYKGFLFFHNQATSNEIIKYNLQKRTVEDRMLLPGGVGRALVYQHSPSTYIDLAVDEHGLWAIHSGPGTHSHLVLTKIEPGTLGVEHSWDTPCRSQDAEASFLLCGVLYVVYSTGGQGPHRITCIYDPLGTISEEDLPNLFFPKRPRSHSMIHYNPRDKQLYAWNEGNQIIYKLQTKRKLPLK</sequence>
<keyword id="KW-0175">Coiled coil</keyword>
<keyword id="KW-0903">Direct protein sequencing</keyword>
<keyword id="KW-1015">Disulfide bond</keyword>
<keyword id="KW-0325">Glycoprotein</keyword>
<keyword id="KW-1267">Proteomics identification</keyword>
<keyword id="KW-1185">Reference proteome</keyword>
<keyword id="KW-0964">Secreted</keyword>
<keyword id="KW-0732">Signal</keyword>
<name>OLFL1_HUMAN</name>
<dbReference type="EMBL" id="AY358591">
    <property type="protein sequence ID" value="AAQ88954.1"/>
    <property type="molecule type" value="mRNA"/>
</dbReference>
<dbReference type="EMBL" id="AK298137">
    <property type="protein sequence ID" value="BAG60415.1"/>
    <property type="molecule type" value="mRNA"/>
</dbReference>
<dbReference type="EMBL" id="AC107884">
    <property type="status" value="NOT_ANNOTATED_CDS"/>
    <property type="molecule type" value="Genomic_DNA"/>
</dbReference>
<dbReference type="EMBL" id="BC035895">
    <property type="protein sequence ID" value="AAH35895.1"/>
    <property type="molecule type" value="mRNA"/>
</dbReference>
<dbReference type="EMBL" id="BC092488">
    <property type="protein sequence ID" value="AAH92488.1"/>
    <property type="molecule type" value="mRNA"/>
</dbReference>
<dbReference type="CCDS" id="CCDS7779.1"/>
<dbReference type="RefSeq" id="NP_001357427.1">
    <property type="nucleotide sequence ID" value="NM_001370498.1"/>
</dbReference>
<dbReference type="RefSeq" id="NP_940876.2">
    <property type="nucleotide sequence ID" value="NM_198474.4"/>
</dbReference>
<dbReference type="RefSeq" id="XP_005252935.1">
    <property type="nucleotide sequence ID" value="XM_005252878.4"/>
</dbReference>
<dbReference type="SMR" id="Q6UWY5"/>
<dbReference type="FunCoup" id="Q6UWY5">
    <property type="interactions" value="189"/>
</dbReference>
<dbReference type="STRING" id="9606.ENSP00000332511"/>
<dbReference type="GlyConnect" id="1586">
    <property type="glycosylation" value="5 N-Linked glycans (2 sites)"/>
</dbReference>
<dbReference type="GlyCosmos" id="Q6UWY5">
    <property type="glycosylation" value="3 sites, 4 glycans"/>
</dbReference>
<dbReference type="GlyGen" id="Q6UWY5">
    <property type="glycosylation" value="3 sites, 36 N-linked glycans (3 sites)"/>
</dbReference>
<dbReference type="iPTMnet" id="Q6UWY5"/>
<dbReference type="PhosphoSitePlus" id="Q6UWY5"/>
<dbReference type="BioMuta" id="OLFML1"/>
<dbReference type="DMDM" id="308153468"/>
<dbReference type="MassIVE" id="Q6UWY5"/>
<dbReference type="PaxDb" id="9606-ENSP00000332511"/>
<dbReference type="PeptideAtlas" id="Q6UWY5"/>
<dbReference type="ProteomicsDB" id="67538"/>
<dbReference type="Antibodypedia" id="42313">
    <property type="antibodies" value="69 antibodies from 12 providers"/>
</dbReference>
<dbReference type="DNASU" id="283298"/>
<dbReference type="Ensembl" id="ENST00000329293.4">
    <property type="protein sequence ID" value="ENSP00000332511.3"/>
    <property type="gene ID" value="ENSG00000183801.8"/>
</dbReference>
<dbReference type="Ensembl" id="ENST00000530135.5">
    <property type="protein sequence ID" value="ENSP00000433455.1"/>
    <property type="gene ID" value="ENSG00000183801.8"/>
</dbReference>
<dbReference type="GeneID" id="283298"/>
<dbReference type="KEGG" id="hsa:283298"/>
<dbReference type="MANE-Select" id="ENST00000329293.4">
    <property type="protein sequence ID" value="ENSP00000332511.3"/>
    <property type="RefSeq nucleotide sequence ID" value="NM_198474.4"/>
    <property type="RefSeq protein sequence ID" value="NP_940876.2"/>
</dbReference>
<dbReference type="UCSC" id="uc001mfi.4">
    <property type="organism name" value="human"/>
</dbReference>
<dbReference type="AGR" id="HGNC:24473"/>
<dbReference type="CTD" id="283298"/>
<dbReference type="GeneCards" id="OLFML1"/>
<dbReference type="HGNC" id="HGNC:24473">
    <property type="gene designation" value="OLFML1"/>
</dbReference>
<dbReference type="HPA" id="ENSG00000183801">
    <property type="expression patterns" value="Tissue enhanced (ovary)"/>
</dbReference>
<dbReference type="neXtProt" id="NX_Q6UWY5"/>
<dbReference type="OpenTargets" id="ENSG00000183801"/>
<dbReference type="PharmGKB" id="PA134904379"/>
<dbReference type="VEuPathDB" id="HostDB:ENSG00000183801"/>
<dbReference type="eggNOG" id="KOG3545">
    <property type="taxonomic scope" value="Eukaryota"/>
</dbReference>
<dbReference type="GeneTree" id="ENSGT00940000160055"/>
<dbReference type="HOGENOM" id="CLU_035236_2_0_1"/>
<dbReference type="InParanoid" id="Q6UWY5"/>
<dbReference type="OMA" id="IHYHPGD"/>
<dbReference type="OrthoDB" id="8626508at2759"/>
<dbReference type="PAN-GO" id="Q6UWY5">
    <property type="GO annotations" value="2 GO annotations based on evolutionary models"/>
</dbReference>
<dbReference type="PhylomeDB" id="Q6UWY5"/>
<dbReference type="TreeFam" id="TF352000"/>
<dbReference type="PathwayCommons" id="Q6UWY5"/>
<dbReference type="BioGRID-ORCS" id="283298">
    <property type="hits" value="17 hits in 1141 CRISPR screens"/>
</dbReference>
<dbReference type="ChiTaRS" id="OLFML1">
    <property type="organism name" value="human"/>
</dbReference>
<dbReference type="GenomeRNAi" id="283298"/>
<dbReference type="Pharos" id="Q6UWY5">
    <property type="development level" value="Tdark"/>
</dbReference>
<dbReference type="PRO" id="PR:Q6UWY5"/>
<dbReference type="Proteomes" id="UP000005640">
    <property type="component" value="Chromosome 11"/>
</dbReference>
<dbReference type="RNAct" id="Q6UWY5">
    <property type="molecule type" value="protein"/>
</dbReference>
<dbReference type="Bgee" id="ENSG00000183801">
    <property type="expression patterns" value="Expressed in parietal pleura and 147 other cell types or tissues"/>
</dbReference>
<dbReference type="ExpressionAtlas" id="Q6UWY5">
    <property type="expression patterns" value="baseline and differential"/>
</dbReference>
<dbReference type="GO" id="GO:0005615">
    <property type="term" value="C:extracellular space"/>
    <property type="evidence" value="ECO:0000318"/>
    <property type="project" value="GO_Central"/>
</dbReference>
<dbReference type="GO" id="GO:0007165">
    <property type="term" value="P:signal transduction"/>
    <property type="evidence" value="ECO:0000318"/>
    <property type="project" value="GO_Central"/>
</dbReference>
<dbReference type="InterPro" id="IPR003112">
    <property type="entry name" value="Olfac-like_dom"/>
</dbReference>
<dbReference type="InterPro" id="IPR050605">
    <property type="entry name" value="Olfactomedin-like_domain"/>
</dbReference>
<dbReference type="PANTHER" id="PTHR23192:SF13">
    <property type="entry name" value="OLFACTOMEDIN-LIKE PROTEIN 1"/>
    <property type="match status" value="1"/>
</dbReference>
<dbReference type="PANTHER" id="PTHR23192">
    <property type="entry name" value="OLFACTOMEDIN-RELATED"/>
    <property type="match status" value="1"/>
</dbReference>
<dbReference type="Pfam" id="PF02191">
    <property type="entry name" value="OLF"/>
    <property type="match status" value="1"/>
</dbReference>
<dbReference type="SMART" id="SM00284">
    <property type="entry name" value="OLF"/>
    <property type="match status" value="1"/>
</dbReference>
<dbReference type="PROSITE" id="PS51132">
    <property type="entry name" value="OLF"/>
    <property type="match status" value="1"/>
</dbReference>
<proteinExistence type="evidence at protein level"/>